<accession>A5GWH9</accession>
<dbReference type="EMBL" id="CT978603">
    <property type="protein sequence ID" value="CAK29238.1"/>
    <property type="molecule type" value="Genomic_DNA"/>
</dbReference>
<dbReference type="SMR" id="A5GWH9"/>
<dbReference type="STRING" id="316278.SynRCC307_2335"/>
<dbReference type="KEGG" id="syr:SynRCC307_2335"/>
<dbReference type="eggNOG" id="ENOG5033CII">
    <property type="taxonomic scope" value="Bacteria"/>
</dbReference>
<dbReference type="HOGENOM" id="CLU_212150_0_0_3"/>
<dbReference type="Proteomes" id="UP000001115">
    <property type="component" value="Chromosome"/>
</dbReference>
<dbReference type="GO" id="GO:0009539">
    <property type="term" value="C:photosystem II reaction center"/>
    <property type="evidence" value="ECO:0007669"/>
    <property type="project" value="InterPro"/>
</dbReference>
<dbReference type="GO" id="GO:0031676">
    <property type="term" value="C:plasma membrane-derived thylakoid membrane"/>
    <property type="evidence" value="ECO:0007669"/>
    <property type="project" value="UniProtKB-SubCell"/>
</dbReference>
<dbReference type="GO" id="GO:0015979">
    <property type="term" value="P:photosynthesis"/>
    <property type="evidence" value="ECO:0007669"/>
    <property type="project" value="UniProtKB-UniRule"/>
</dbReference>
<dbReference type="HAMAP" id="MF_01316">
    <property type="entry name" value="PSII_PsbI"/>
    <property type="match status" value="1"/>
</dbReference>
<dbReference type="InterPro" id="IPR003686">
    <property type="entry name" value="PSII_PsbI"/>
</dbReference>
<dbReference type="InterPro" id="IPR037271">
    <property type="entry name" value="PSII_PsbI_sf"/>
</dbReference>
<dbReference type="NCBIfam" id="NF002735">
    <property type="entry name" value="PRK02655.1"/>
    <property type="match status" value="1"/>
</dbReference>
<dbReference type="PANTHER" id="PTHR35772">
    <property type="entry name" value="PHOTOSYSTEM II REACTION CENTER PROTEIN I"/>
    <property type="match status" value="1"/>
</dbReference>
<dbReference type="PANTHER" id="PTHR35772:SF1">
    <property type="entry name" value="PHOTOSYSTEM II REACTION CENTER PROTEIN I"/>
    <property type="match status" value="1"/>
</dbReference>
<dbReference type="Pfam" id="PF02532">
    <property type="entry name" value="PsbI"/>
    <property type="match status" value="1"/>
</dbReference>
<dbReference type="SUPFAM" id="SSF161041">
    <property type="entry name" value="Photosystem II reaction center protein I, PsbI"/>
    <property type="match status" value="1"/>
</dbReference>
<name>PSBI_SYNR3</name>
<feature type="chain" id="PRO_1000051898" description="Photosystem II reaction center protein I">
    <location>
        <begin position="1"/>
        <end position="39"/>
    </location>
</feature>
<feature type="transmembrane region" description="Helical" evidence="1">
    <location>
        <begin position="6"/>
        <end position="26"/>
    </location>
</feature>
<reference key="1">
    <citation type="submission" date="2006-05" db="EMBL/GenBank/DDBJ databases">
        <authorList>
            <consortium name="Genoscope"/>
        </authorList>
    </citation>
    <scope>NUCLEOTIDE SEQUENCE [LARGE SCALE GENOMIC DNA]</scope>
    <source>
        <strain>RCC307</strain>
    </source>
</reference>
<gene>
    <name evidence="1" type="primary">psbI</name>
    <name type="ordered locus">SynRCC307_2335</name>
</gene>
<protein>
    <recommendedName>
        <fullName evidence="1">Photosystem II reaction center protein I</fullName>
        <shortName evidence="1">PSII-I</shortName>
    </recommendedName>
    <alternativeName>
        <fullName evidence="1">PSII 4.4 kDa protein</fullName>
    </alternativeName>
</protein>
<keyword id="KW-0472">Membrane</keyword>
<keyword id="KW-0602">Photosynthesis</keyword>
<keyword id="KW-0604">Photosystem II</keyword>
<keyword id="KW-0674">Reaction center</keyword>
<keyword id="KW-1185">Reference proteome</keyword>
<keyword id="KW-0793">Thylakoid</keyword>
<keyword id="KW-0812">Transmembrane</keyword>
<keyword id="KW-1133">Transmembrane helix</keyword>
<comment type="function">
    <text evidence="1">One of the components of the core complex of photosystem II (PSII), required for its stability and/or assembly. PSII is a light-driven water:plastoquinone oxidoreductase that uses light energy to abstract electrons from H(2)O, generating O(2) and a proton gradient subsequently used for ATP formation. It consists of a core antenna complex that captures photons, and an electron transfer chain that converts photonic excitation into a charge separation.</text>
</comment>
<comment type="subunit">
    <text evidence="1">PSII is composed of 1 copy each of membrane proteins PsbA, PsbB, PsbC, PsbD, PsbE, PsbF, PsbH, PsbI, PsbJ, PsbK, PsbL, PsbM, PsbT, PsbX, PsbY, PsbZ, Psb30/Ycf12, peripheral proteins PsbO, CyanoQ (PsbQ), PsbU, PsbV and a large number of cofactors. It forms dimeric complexes.</text>
</comment>
<comment type="subcellular location">
    <subcellularLocation>
        <location evidence="1">Cellular thylakoid membrane</location>
        <topology evidence="1">Single-pass membrane protein</topology>
    </subcellularLocation>
</comment>
<comment type="similarity">
    <text evidence="1">Belongs to the PsbI family.</text>
</comment>
<evidence type="ECO:0000255" key="1">
    <source>
        <dbReference type="HAMAP-Rule" id="MF_01316"/>
    </source>
</evidence>
<proteinExistence type="inferred from homology"/>
<sequence length="39" mass="4460">MLALKISVYSVVFFFIGIFMFGFLASDPSRTPSRKDLEE</sequence>
<organism>
    <name type="scientific">Synechococcus sp. (strain RCC307)</name>
    <dbReference type="NCBI Taxonomy" id="316278"/>
    <lineage>
        <taxon>Bacteria</taxon>
        <taxon>Bacillati</taxon>
        <taxon>Cyanobacteriota</taxon>
        <taxon>Cyanophyceae</taxon>
        <taxon>Synechococcales</taxon>
        <taxon>Synechococcaceae</taxon>
        <taxon>Synechococcus</taxon>
    </lineage>
</organism>